<proteinExistence type="inferred from homology"/>
<reference key="1">
    <citation type="submission" date="1999-01" db="EMBL/GenBank/DDBJ databases">
        <authorList>
            <person name="Lee H.J."/>
            <person name="Kang H.S."/>
        </authorList>
    </citation>
    <scope>NUCLEOTIDE SEQUENCE [GENOMIC DNA]</scope>
    <source>
        <strain>ATCC 31821 / ZM4 / CP4</strain>
    </source>
</reference>
<reference key="2">
    <citation type="journal article" date="2005" name="Nat. Biotechnol.">
        <title>The genome sequence of the ethanologenic bacterium Zymomonas mobilis ZM4.</title>
        <authorList>
            <person name="Seo J.-S."/>
            <person name="Chong H."/>
            <person name="Park H.S."/>
            <person name="Yoon K.-O."/>
            <person name="Jung C."/>
            <person name="Kim J.J."/>
            <person name="Hong J.H."/>
            <person name="Kim H."/>
            <person name="Kim J.-H."/>
            <person name="Kil J.-I."/>
            <person name="Park C.J."/>
            <person name="Oh H.-M."/>
            <person name="Lee J.-S."/>
            <person name="Jin S.-J."/>
            <person name="Um H.-W."/>
            <person name="Lee H.-J."/>
            <person name="Oh S.-J."/>
            <person name="Kim J.Y."/>
            <person name="Kang H.L."/>
            <person name="Lee S.Y."/>
            <person name="Lee K.J."/>
            <person name="Kang H.S."/>
        </authorList>
    </citation>
    <scope>NUCLEOTIDE SEQUENCE [LARGE SCALE GENOMIC DNA]</scope>
    <source>
        <strain>ATCC 31821 / ZM4 / CP4</strain>
    </source>
</reference>
<gene>
    <name evidence="1" type="primary">psd</name>
    <name type="ordered locus">ZMO1160</name>
</gene>
<accession>Q9X5E3</accession>
<accession>Q5NNC6</accession>
<organism>
    <name type="scientific">Zymomonas mobilis subsp. mobilis (strain ATCC 31821 / ZM4 / CP4)</name>
    <dbReference type="NCBI Taxonomy" id="264203"/>
    <lineage>
        <taxon>Bacteria</taxon>
        <taxon>Pseudomonadati</taxon>
        <taxon>Pseudomonadota</taxon>
        <taxon>Alphaproteobacteria</taxon>
        <taxon>Sphingomonadales</taxon>
        <taxon>Zymomonadaceae</taxon>
        <taxon>Zymomonas</taxon>
    </lineage>
</organism>
<sequence length="246" mass="26959">MNKEEQRKNSAAQSIRWHFPSIHPEGRKFFVIAVIISAIITYFSWLWMAWPLGVLCFCVAAFFRDPIRTVPEGDGLIVSPADGMVCLIADVPPPPELAGADGLGDAPLTRVSIFMSVFDVHINRAPVPGRIARIAYIPGAFVNADLDKASEKNERQHFMIETKEGINVGLTQIAGLIARRIVPLTKVEDYVERGERIGLIRFGSRLDVYLPAGVTPQVALGQRCLAGETILGQIGSQAKPLTGMRL</sequence>
<feature type="chain" id="PRO_0000029817" description="Phosphatidylserine decarboxylase beta chain" evidence="1">
    <location>
        <begin position="1"/>
        <end position="203"/>
    </location>
</feature>
<feature type="chain" id="PRO_0000029818" description="Phosphatidylserine decarboxylase alpha chain" evidence="1">
    <location>
        <begin position="204"/>
        <end position="246"/>
    </location>
</feature>
<feature type="active site" description="Schiff-base intermediate with substrate; via pyruvic acid" evidence="1">
    <location>
        <position position="204"/>
    </location>
</feature>
<feature type="site" description="Cleavage (non-hydrolytic); by autocatalysis" evidence="1">
    <location>
        <begin position="203"/>
        <end position="204"/>
    </location>
</feature>
<feature type="modified residue" description="Pyruvic acid (Ser); by autocatalysis" evidence="1">
    <location>
        <position position="204"/>
    </location>
</feature>
<feature type="sequence conflict" description="In Ref. 1." evidence="2" ref="1">
    <original>ILGQIGSQAKPLTGMRL</original>
    <variation>FWDRLDHKPSR</variation>
    <location>
        <begin position="230"/>
        <end position="246"/>
    </location>
</feature>
<name>PSD_ZYMMO</name>
<protein>
    <recommendedName>
        <fullName evidence="1">Phosphatidylserine decarboxylase proenzyme</fullName>
        <ecNumber evidence="1">4.1.1.65</ecNumber>
    </recommendedName>
    <component>
        <recommendedName>
            <fullName evidence="1">Phosphatidylserine decarboxylase alpha chain</fullName>
        </recommendedName>
    </component>
    <component>
        <recommendedName>
            <fullName evidence="1">Phosphatidylserine decarboxylase beta chain</fullName>
        </recommendedName>
    </component>
</protein>
<comment type="function">
    <text evidence="1">Catalyzes the formation of phosphatidylethanolamine (PtdEtn) from phosphatidylserine (PtdSer).</text>
</comment>
<comment type="catalytic activity">
    <reaction evidence="1">
        <text>a 1,2-diacyl-sn-glycero-3-phospho-L-serine + H(+) = a 1,2-diacyl-sn-glycero-3-phosphoethanolamine + CO2</text>
        <dbReference type="Rhea" id="RHEA:20828"/>
        <dbReference type="ChEBI" id="CHEBI:15378"/>
        <dbReference type="ChEBI" id="CHEBI:16526"/>
        <dbReference type="ChEBI" id="CHEBI:57262"/>
        <dbReference type="ChEBI" id="CHEBI:64612"/>
        <dbReference type="EC" id="4.1.1.65"/>
    </reaction>
</comment>
<comment type="cofactor">
    <cofactor evidence="1">
        <name>pyruvate</name>
        <dbReference type="ChEBI" id="CHEBI:15361"/>
    </cofactor>
    <text evidence="1">Binds 1 pyruvoyl group covalently per subunit.</text>
</comment>
<comment type="pathway">
    <text evidence="1">Phospholipid metabolism; phosphatidylethanolamine biosynthesis; phosphatidylethanolamine from CDP-diacylglycerol: step 2/2.</text>
</comment>
<comment type="subunit">
    <text evidence="1">Heterodimer of a large membrane-associated beta subunit and a small pyruvoyl-containing alpha subunit.</text>
</comment>
<comment type="subcellular location">
    <subcellularLocation>
        <location evidence="1">Cell membrane</location>
        <topology evidence="1">Peripheral membrane protein</topology>
    </subcellularLocation>
</comment>
<comment type="PTM">
    <text evidence="1">Is synthesized initially as an inactive proenzyme. Formation of the active enzyme involves a self-maturation process in which the active site pyruvoyl group is generated from an internal serine residue via an autocatalytic post-translational modification. Two non-identical subunits are generated from the proenzyme in this reaction, and the pyruvate is formed at the N-terminus of the alpha chain, which is derived from the carboxyl end of the proenzyme. The post-translation cleavage follows an unusual pathway, termed non-hydrolytic serinolysis, in which the side chain hydroxyl group of the serine supplies its oxygen atom to form the C-terminus of the beta chain, while the remainder of the serine residue undergoes an oxidative deamination to produce ammonia and the pyruvoyl prosthetic group on the alpha chain.</text>
</comment>
<comment type="similarity">
    <text evidence="1">Belongs to the phosphatidylserine decarboxylase family. PSD-A subfamily.</text>
</comment>
<keyword id="KW-1003">Cell membrane</keyword>
<keyword id="KW-0210">Decarboxylase</keyword>
<keyword id="KW-0444">Lipid biosynthesis</keyword>
<keyword id="KW-0443">Lipid metabolism</keyword>
<keyword id="KW-0456">Lyase</keyword>
<keyword id="KW-0472">Membrane</keyword>
<keyword id="KW-0594">Phospholipid biosynthesis</keyword>
<keyword id="KW-1208">Phospholipid metabolism</keyword>
<keyword id="KW-0670">Pyruvate</keyword>
<keyword id="KW-1185">Reference proteome</keyword>
<keyword id="KW-0865">Zymogen</keyword>
<dbReference type="EC" id="4.1.1.65" evidence="1"/>
<dbReference type="EMBL" id="AF124757">
    <property type="protein sequence ID" value="AAD29650.1"/>
    <property type="molecule type" value="Genomic_DNA"/>
</dbReference>
<dbReference type="EMBL" id="AE008692">
    <property type="protein sequence ID" value="AAV89784.1"/>
    <property type="molecule type" value="Genomic_DNA"/>
</dbReference>
<dbReference type="RefSeq" id="WP_011240986.1">
    <property type="nucleotide sequence ID" value="NZ_CP035711.1"/>
</dbReference>
<dbReference type="STRING" id="264203.ZMO1160"/>
<dbReference type="KEGG" id="zmo:ZMO1160"/>
<dbReference type="eggNOG" id="COG0688">
    <property type="taxonomic scope" value="Bacteria"/>
</dbReference>
<dbReference type="HOGENOM" id="CLU_072492_0_0_5"/>
<dbReference type="UniPathway" id="UPA00558">
    <property type="reaction ID" value="UER00616"/>
</dbReference>
<dbReference type="Proteomes" id="UP000001173">
    <property type="component" value="Chromosome"/>
</dbReference>
<dbReference type="GO" id="GO:0005886">
    <property type="term" value="C:plasma membrane"/>
    <property type="evidence" value="ECO:0007669"/>
    <property type="project" value="UniProtKB-SubCell"/>
</dbReference>
<dbReference type="GO" id="GO:0004609">
    <property type="term" value="F:phosphatidylserine decarboxylase activity"/>
    <property type="evidence" value="ECO:0007669"/>
    <property type="project" value="UniProtKB-UniRule"/>
</dbReference>
<dbReference type="GO" id="GO:0006646">
    <property type="term" value="P:phosphatidylethanolamine biosynthetic process"/>
    <property type="evidence" value="ECO:0007669"/>
    <property type="project" value="UniProtKB-UniRule"/>
</dbReference>
<dbReference type="HAMAP" id="MF_00664">
    <property type="entry name" value="PS_decarb_PSD_A"/>
    <property type="match status" value="1"/>
</dbReference>
<dbReference type="InterPro" id="IPR003817">
    <property type="entry name" value="PS_Dcarbxylase"/>
</dbReference>
<dbReference type="InterPro" id="IPR033175">
    <property type="entry name" value="PSD-A"/>
</dbReference>
<dbReference type="NCBIfam" id="NF003678">
    <property type="entry name" value="PRK05305.1-2"/>
    <property type="match status" value="1"/>
</dbReference>
<dbReference type="NCBIfam" id="NF003679">
    <property type="entry name" value="PRK05305.1-3"/>
    <property type="match status" value="1"/>
</dbReference>
<dbReference type="NCBIfam" id="NF003685">
    <property type="entry name" value="PRK05305.2-5"/>
    <property type="match status" value="1"/>
</dbReference>
<dbReference type="PANTHER" id="PTHR35809">
    <property type="entry name" value="ARCHAETIDYLSERINE DECARBOXYLASE PROENZYME-RELATED"/>
    <property type="match status" value="1"/>
</dbReference>
<dbReference type="PANTHER" id="PTHR35809:SF1">
    <property type="entry name" value="ARCHAETIDYLSERINE DECARBOXYLASE PROENZYME-RELATED"/>
    <property type="match status" value="1"/>
</dbReference>
<dbReference type="Pfam" id="PF02666">
    <property type="entry name" value="PS_Dcarbxylase"/>
    <property type="match status" value="1"/>
</dbReference>
<evidence type="ECO:0000255" key="1">
    <source>
        <dbReference type="HAMAP-Rule" id="MF_00664"/>
    </source>
</evidence>
<evidence type="ECO:0000305" key="2"/>